<name>MQO_PROM0</name>
<proteinExistence type="inferred from homology"/>
<organism>
    <name type="scientific">Prochlorococcus marinus (strain MIT 9301)</name>
    <dbReference type="NCBI Taxonomy" id="167546"/>
    <lineage>
        <taxon>Bacteria</taxon>
        <taxon>Bacillati</taxon>
        <taxon>Cyanobacteriota</taxon>
        <taxon>Cyanophyceae</taxon>
        <taxon>Synechococcales</taxon>
        <taxon>Prochlorococcaceae</taxon>
        <taxon>Prochlorococcus</taxon>
    </lineage>
</organism>
<reference key="1">
    <citation type="journal article" date="2007" name="PLoS Genet.">
        <title>Patterns and implications of gene gain and loss in the evolution of Prochlorococcus.</title>
        <authorList>
            <person name="Kettler G.C."/>
            <person name="Martiny A.C."/>
            <person name="Huang K."/>
            <person name="Zucker J."/>
            <person name="Coleman M.L."/>
            <person name="Rodrigue S."/>
            <person name="Chen F."/>
            <person name="Lapidus A."/>
            <person name="Ferriera S."/>
            <person name="Johnson J."/>
            <person name="Steglich C."/>
            <person name="Church G.M."/>
            <person name="Richardson P."/>
            <person name="Chisholm S.W."/>
        </authorList>
    </citation>
    <scope>NUCLEOTIDE SEQUENCE [LARGE SCALE GENOMIC DNA]</scope>
    <source>
        <strain>MIT 9301</strain>
    </source>
</reference>
<dbReference type="EC" id="1.1.5.4" evidence="1"/>
<dbReference type="EMBL" id="CP000576">
    <property type="protein sequence ID" value="ABO17062.1"/>
    <property type="molecule type" value="Genomic_DNA"/>
</dbReference>
<dbReference type="RefSeq" id="WP_011862439.1">
    <property type="nucleotide sequence ID" value="NC_009091.1"/>
</dbReference>
<dbReference type="SMR" id="A3PBD7"/>
<dbReference type="STRING" id="167546.P9301_04391"/>
<dbReference type="KEGG" id="pmg:P9301_04391"/>
<dbReference type="eggNOG" id="COG0579">
    <property type="taxonomic scope" value="Bacteria"/>
</dbReference>
<dbReference type="HOGENOM" id="CLU_028151_0_0_3"/>
<dbReference type="OrthoDB" id="9763983at2"/>
<dbReference type="UniPathway" id="UPA00223">
    <property type="reaction ID" value="UER01008"/>
</dbReference>
<dbReference type="Proteomes" id="UP000001430">
    <property type="component" value="Chromosome"/>
</dbReference>
<dbReference type="GO" id="GO:0047545">
    <property type="term" value="F:2-hydroxyglutarate dehydrogenase activity"/>
    <property type="evidence" value="ECO:0007669"/>
    <property type="project" value="TreeGrafter"/>
</dbReference>
<dbReference type="GO" id="GO:0008924">
    <property type="term" value="F:L-malate dehydrogenase (quinone) activity"/>
    <property type="evidence" value="ECO:0007669"/>
    <property type="project" value="UniProtKB-UniRule"/>
</dbReference>
<dbReference type="GO" id="GO:0006099">
    <property type="term" value="P:tricarboxylic acid cycle"/>
    <property type="evidence" value="ECO:0007669"/>
    <property type="project" value="UniProtKB-UniRule"/>
</dbReference>
<dbReference type="HAMAP" id="MF_00212">
    <property type="entry name" value="MQO"/>
    <property type="match status" value="1"/>
</dbReference>
<dbReference type="InterPro" id="IPR036188">
    <property type="entry name" value="FAD/NAD-bd_sf"/>
</dbReference>
<dbReference type="InterPro" id="IPR006231">
    <property type="entry name" value="MQO"/>
</dbReference>
<dbReference type="NCBIfam" id="TIGR01320">
    <property type="entry name" value="mal_quin_oxido"/>
    <property type="match status" value="1"/>
</dbReference>
<dbReference type="NCBIfam" id="NF003606">
    <property type="entry name" value="PRK05257.2-1"/>
    <property type="match status" value="1"/>
</dbReference>
<dbReference type="NCBIfam" id="NF003607">
    <property type="entry name" value="PRK05257.2-3"/>
    <property type="match status" value="1"/>
</dbReference>
<dbReference type="NCBIfam" id="NF003611">
    <property type="entry name" value="PRK05257.3-2"/>
    <property type="match status" value="1"/>
</dbReference>
<dbReference type="PANTHER" id="PTHR43104">
    <property type="entry name" value="L-2-HYDROXYGLUTARATE DEHYDROGENASE, MITOCHONDRIAL"/>
    <property type="match status" value="1"/>
</dbReference>
<dbReference type="PANTHER" id="PTHR43104:SF2">
    <property type="entry name" value="L-2-HYDROXYGLUTARATE DEHYDROGENASE, MITOCHONDRIAL"/>
    <property type="match status" value="1"/>
</dbReference>
<dbReference type="Pfam" id="PF06039">
    <property type="entry name" value="Mqo"/>
    <property type="match status" value="1"/>
</dbReference>
<dbReference type="SUPFAM" id="SSF51905">
    <property type="entry name" value="FAD/NAD(P)-binding domain"/>
    <property type="match status" value="1"/>
</dbReference>
<sequence length="498" mass="55522">MTSSKNPTNDNSYFDAVLVGGGIMSSTLALLISEVLPDIKFLIIEKLNAPGSESTGAFNNAGTGHAANCELNYTPLDEKGNLKIDKALSINRSFETSMSLWASLYEAGKIDIKKFLKFIPHISFVSGQDNISFLKKRFQKMTENPEFIDMEFSSSFDEISSWAPLITKDRNPSTQIAATRIGRGTDINFEALTKEYLSLVSLNKNVEIRYKTELVDLKKIDKKQWELEISSEGRKTSIRTGYVFLGAGGKTINYLQKSKIPEAKSYGGFPVSGKWLICEKKDLTEKHNSKVYGKADIGSPPMSVPHLDTRWIDNKKLLLYGPFAGFTTKFLKQSSYFDLFSSIKKNNIFSMLDVGFKNNDLINYLISQSLKNHNSRVENLKNMMPSANSSDWYLKNAGQRVQIIKKTEAGGSLKFGTEIVNSSDGSLSALLGASPGASTAVSIMVKVLEKSVFFLNDKHNLQKKINDLIYPELSDSENNSTFIKDIKKRNNSIFGFHP</sequence>
<feature type="chain" id="PRO_0000325507" description="Probable malate:quinone oxidoreductase">
    <location>
        <begin position="1"/>
        <end position="498"/>
    </location>
</feature>
<keyword id="KW-0274">FAD</keyword>
<keyword id="KW-0285">Flavoprotein</keyword>
<keyword id="KW-0560">Oxidoreductase</keyword>
<keyword id="KW-1185">Reference proteome</keyword>
<keyword id="KW-0816">Tricarboxylic acid cycle</keyword>
<accession>A3PBD7</accession>
<gene>
    <name evidence="1" type="primary">mqo</name>
    <name type="ordered locus">P9301_04391</name>
</gene>
<protein>
    <recommendedName>
        <fullName evidence="1">Probable malate:quinone oxidoreductase</fullName>
        <ecNumber evidence="1">1.1.5.4</ecNumber>
    </recommendedName>
    <alternativeName>
        <fullName evidence="1">MQO</fullName>
    </alternativeName>
    <alternativeName>
        <fullName evidence="1">Malate dehydrogenase [quinone]</fullName>
    </alternativeName>
</protein>
<comment type="catalytic activity">
    <reaction evidence="1">
        <text>(S)-malate + a quinone = a quinol + oxaloacetate</text>
        <dbReference type="Rhea" id="RHEA:46012"/>
        <dbReference type="ChEBI" id="CHEBI:15589"/>
        <dbReference type="ChEBI" id="CHEBI:16452"/>
        <dbReference type="ChEBI" id="CHEBI:24646"/>
        <dbReference type="ChEBI" id="CHEBI:132124"/>
        <dbReference type="EC" id="1.1.5.4"/>
    </reaction>
</comment>
<comment type="cofactor">
    <cofactor evidence="1">
        <name>FAD</name>
        <dbReference type="ChEBI" id="CHEBI:57692"/>
    </cofactor>
</comment>
<comment type="pathway">
    <text evidence="1">Carbohydrate metabolism; tricarboxylic acid cycle; oxaloacetate from (S)-malate (quinone route): step 1/1.</text>
</comment>
<comment type="similarity">
    <text evidence="1">Belongs to the MQO family.</text>
</comment>
<evidence type="ECO:0000255" key="1">
    <source>
        <dbReference type="HAMAP-Rule" id="MF_00212"/>
    </source>
</evidence>